<name>NDK_METTH</name>
<protein>
    <recommendedName>
        <fullName evidence="1">Nucleoside diphosphate kinase</fullName>
        <shortName evidence="1">NDK</shortName>
        <shortName evidence="1">NDP kinase</shortName>
        <ecNumber evidence="1">2.7.4.6</ecNumber>
    </recommendedName>
    <alternativeName>
        <fullName evidence="1">Nucleoside-2-P kinase</fullName>
    </alternativeName>
</protein>
<accession>O26358</accession>
<evidence type="ECO:0000255" key="1">
    <source>
        <dbReference type="HAMAP-Rule" id="MF_00451"/>
    </source>
</evidence>
<evidence type="ECO:0000305" key="2"/>
<gene>
    <name evidence="1" type="primary">ndk</name>
    <name type="ordered locus">MTH_258</name>
</gene>
<comment type="function">
    <text evidence="1">Major role in the synthesis of nucleoside triphosphates other than ATP. The ATP gamma phosphate is transferred to the NDP beta phosphate via a ping-pong mechanism, using a phosphorylated active-site intermediate.</text>
</comment>
<comment type="catalytic activity">
    <reaction evidence="1">
        <text>a 2'-deoxyribonucleoside 5'-diphosphate + ATP = a 2'-deoxyribonucleoside 5'-triphosphate + ADP</text>
        <dbReference type="Rhea" id="RHEA:44640"/>
        <dbReference type="ChEBI" id="CHEBI:30616"/>
        <dbReference type="ChEBI" id="CHEBI:61560"/>
        <dbReference type="ChEBI" id="CHEBI:73316"/>
        <dbReference type="ChEBI" id="CHEBI:456216"/>
        <dbReference type="EC" id="2.7.4.6"/>
    </reaction>
</comment>
<comment type="catalytic activity">
    <reaction evidence="1">
        <text>a ribonucleoside 5'-diphosphate + ATP = a ribonucleoside 5'-triphosphate + ADP</text>
        <dbReference type="Rhea" id="RHEA:18113"/>
        <dbReference type="ChEBI" id="CHEBI:30616"/>
        <dbReference type="ChEBI" id="CHEBI:57930"/>
        <dbReference type="ChEBI" id="CHEBI:61557"/>
        <dbReference type="ChEBI" id="CHEBI:456216"/>
        <dbReference type="EC" id="2.7.4.6"/>
    </reaction>
</comment>
<comment type="cofactor">
    <cofactor evidence="1">
        <name>Mg(2+)</name>
        <dbReference type="ChEBI" id="CHEBI:18420"/>
    </cofactor>
</comment>
<comment type="subcellular location">
    <subcellularLocation>
        <location evidence="1">Cytoplasm</location>
    </subcellularLocation>
</comment>
<comment type="similarity">
    <text evidence="1 2">Belongs to the NDK family.</text>
</comment>
<comment type="sequence caution" evidence="2">
    <conflict type="erroneous initiation">
        <sequence resource="EMBL-CDS" id="AAB84764"/>
    </conflict>
</comment>
<sequence length="150" mass="17245">MEKSFVMLKPDAVKRRLAGRIIARFEDRGLKIVAFKMLQIPEDLAMEHYQEHREKPFFRDLVDYITSAPVIAMVIEGKDCISLIRKMVGATNPAEADLGTIRGDFALETGRNIIHASDSPESAEREIKLFFDESEICSYEMPDREMIYEE</sequence>
<dbReference type="EC" id="2.7.4.6" evidence="1"/>
<dbReference type="EMBL" id="AE000666">
    <property type="protein sequence ID" value="AAB84764.1"/>
    <property type="status" value="ALT_INIT"/>
    <property type="molecule type" value="Genomic_DNA"/>
</dbReference>
<dbReference type="PIR" id="D69132">
    <property type="entry name" value="D69132"/>
</dbReference>
<dbReference type="SMR" id="O26358"/>
<dbReference type="FunCoup" id="O26358">
    <property type="interactions" value="251"/>
</dbReference>
<dbReference type="STRING" id="187420.MTH_258"/>
<dbReference type="PaxDb" id="187420-MTH_258"/>
<dbReference type="EnsemblBacteria" id="AAB84764">
    <property type="protein sequence ID" value="AAB84764"/>
    <property type="gene ID" value="MTH_258"/>
</dbReference>
<dbReference type="KEGG" id="mth:MTH_258"/>
<dbReference type="PATRIC" id="fig|187420.15.peg.227"/>
<dbReference type="HOGENOM" id="CLU_060216_6_3_2"/>
<dbReference type="InParanoid" id="O26358"/>
<dbReference type="Proteomes" id="UP000005223">
    <property type="component" value="Chromosome"/>
</dbReference>
<dbReference type="GO" id="GO:0005737">
    <property type="term" value="C:cytoplasm"/>
    <property type="evidence" value="ECO:0007669"/>
    <property type="project" value="UniProtKB-SubCell"/>
</dbReference>
<dbReference type="GO" id="GO:0005524">
    <property type="term" value="F:ATP binding"/>
    <property type="evidence" value="ECO:0007669"/>
    <property type="project" value="UniProtKB-UniRule"/>
</dbReference>
<dbReference type="GO" id="GO:0046872">
    <property type="term" value="F:metal ion binding"/>
    <property type="evidence" value="ECO:0007669"/>
    <property type="project" value="UniProtKB-KW"/>
</dbReference>
<dbReference type="GO" id="GO:0004550">
    <property type="term" value="F:nucleoside diphosphate kinase activity"/>
    <property type="evidence" value="ECO:0007669"/>
    <property type="project" value="UniProtKB-UniRule"/>
</dbReference>
<dbReference type="GO" id="GO:0006241">
    <property type="term" value="P:CTP biosynthetic process"/>
    <property type="evidence" value="ECO:0007669"/>
    <property type="project" value="UniProtKB-UniRule"/>
</dbReference>
<dbReference type="GO" id="GO:0006183">
    <property type="term" value="P:GTP biosynthetic process"/>
    <property type="evidence" value="ECO:0007669"/>
    <property type="project" value="UniProtKB-UniRule"/>
</dbReference>
<dbReference type="GO" id="GO:0006228">
    <property type="term" value="P:UTP biosynthetic process"/>
    <property type="evidence" value="ECO:0007669"/>
    <property type="project" value="UniProtKB-UniRule"/>
</dbReference>
<dbReference type="CDD" id="cd04413">
    <property type="entry name" value="NDPk_I"/>
    <property type="match status" value="1"/>
</dbReference>
<dbReference type="FunFam" id="3.30.70.141:FF:000003">
    <property type="entry name" value="Nucleoside diphosphate kinase"/>
    <property type="match status" value="1"/>
</dbReference>
<dbReference type="Gene3D" id="3.30.70.141">
    <property type="entry name" value="Nucleoside diphosphate kinase-like domain"/>
    <property type="match status" value="1"/>
</dbReference>
<dbReference type="HAMAP" id="MF_00451">
    <property type="entry name" value="NDP_kinase"/>
    <property type="match status" value="1"/>
</dbReference>
<dbReference type="InterPro" id="IPR034907">
    <property type="entry name" value="NDK-like_dom"/>
</dbReference>
<dbReference type="InterPro" id="IPR036850">
    <property type="entry name" value="NDK-like_dom_sf"/>
</dbReference>
<dbReference type="InterPro" id="IPR001564">
    <property type="entry name" value="Nucleoside_diP_kinase"/>
</dbReference>
<dbReference type="InterPro" id="IPR023005">
    <property type="entry name" value="Nucleoside_diP_kinase_AS"/>
</dbReference>
<dbReference type="NCBIfam" id="NF001908">
    <property type="entry name" value="PRK00668.1"/>
    <property type="match status" value="1"/>
</dbReference>
<dbReference type="PANTHER" id="PTHR11349">
    <property type="entry name" value="NUCLEOSIDE DIPHOSPHATE KINASE"/>
    <property type="match status" value="1"/>
</dbReference>
<dbReference type="Pfam" id="PF00334">
    <property type="entry name" value="NDK"/>
    <property type="match status" value="1"/>
</dbReference>
<dbReference type="PRINTS" id="PR01243">
    <property type="entry name" value="NUCDPKINASE"/>
</dbReference>
<dbReference type="SMART" id="SM00562">
    <property type="entry name" value="NDK"/>
    <property type="match status" value="1"/>
</dbReference>
<dbReference type="SUPFAM" id="SSF54919">
    <property type="entry name" value="Nucleoside diphosphate kinase, NDK"/>
    <property type="match status" value="1"/>
</dbReference>
<dbReference type="PROSITE" id="PS00469">
    <property type="entry name" value="NDPK"/>
    <property type="match status" value="1"/>
</dbReference>
<dbReference type="PROSITE" id="PS51374">
    <property type="entry name" value="NDPK_LIKE"/>
    <property type="match status" value="1"/>
</dbReference>
<organism>
    <name type="scientific">Methanothermobacter thermautotrophicus (strain ATCC 29096 / DSM 1053 / JCM 10044 / NBRC 100330 / Delta H)</name>
    <name type="common">Methanobacterium thermoautotrophicum</name>
    <dbReference type="NCBI Taxonomy" id="187420"/>
    <lineage>
        <taxon>Archaea</taxon>
        <taxon>Methanobacteriati</taxon>
        <taxon>Methanobacteriota</taxon>
        <taxon>Methanomada group</taxon>
        <taxon>Methanobacteria</taxon>
        <taxon>Methanobacteriales</taxon>
        <taxon>Methanobacteriaceae</taxon>
        <taxon>Methanothermobacter</taxon>
    </lineage>
</organism>
<proteinExistence type="inferred from homology"/>
<keyword id="KW-0067">ATP-binding</keyword>
<keyword id="KW-0963">Cytoplasm</keyword>
<keyword id="KW-0418">Kinase</keyword>
<keyword id="KW-0460">Magnesium</keyword>
<keyword id="KW-0479">Metal-binding</keyword>
<keyword id="KW-0546">Nucleotide metabolism</keyword>
<keyword id="KW-0547">Nucleotide-binding</keyword>
<keyword id="KW-0597">Phosphoprotein</keyword>
<keyword id="KW-1185">Reference proteome</keyword>
<keyword id="KW-0808">Transferase</keyword>
<reference key="1">
    <citation type="journal article" date="1997" name="J. Bacteriol.">
        <title>Complete genome sequence of Methanobacterium thermoautotrophicum deltaH: functional analysis and comparative genomics.</title>
        <authorList>
            <person name="Smith D.R."/>
            <person name="Doucette-Stamm L.A."/>
            <person name="Deloughery C."/>
            <person name="Lee H.-M."/>
            <person name="Dubois J."/>
            <person name="Aldredge T."/>
            <person name="Bashirzadeh R."/>
            <person name="Blakely D."/>
            <person name="Cook R."/>
            <person name="Gilbert K."/>
            <person name="Harrison D."/>
            <person name="Hoang L."/>
            <person name="Keagle P."/>
            <person name="Lumm W."/>
            <person name="Pothier B."/>
            <person name="Qiu D."/>
            <person name="Spadafora R."/>
            <person name="Vicare R."/>
            <person name="Wang Y."/>
            <person name="Wierzbowski J."/>
            <person name="Gibson R."/>
            <person name="Jiwani N."/>
            <person name="Caruso A."/>
            <person name="Bush D."/>
            <person name="Safer H."/>
            <person name="Patwell D."/>
            <person name="Prabhakar S."/>
            <person name="McDougall S."/>
            <person name="Shimer G."/>
            <person name="Goyal A."/>
            <person name="Pietrovski S."/>
            <person name="Church G.M."/>
            <person name="Daniels C.J."/>
            <person name="Mao J.-I."/>
            <person name="Rice P."/>
            <person name="Noelling J."/>
            <person name="Reeve J.N."/>
        </authorList>
    </citation>
    <scope>NUCLEOTIDE SEQUENCE [LARGE SCALE GENOMIC DNA]</scope>
    <source>
        <strain>ATCC 29096 / DSM 1053 / JCM 10044 / NBRC 100330 / Delta H</strain>
    </source>
</reference>
<feature type="chain" id="PRO_0000137094" description="Nucleoside diphosphate kinase">
    <location>
        <begin position="1"/>
        <end position="150"/>
    </location>
</feature>
<feature type="active site" description="Pros-phosphohistidine intermediate" evidence="1">
    <location>
        <position position="115"/>
    </location>
</feature>
<feature type="binding site" evidence="1">
    <location>
        <position position="9"/>
    </location>
    <ligand>
        <name>ATP</name>
        <dbReference type="ChEBI" id="CHEBI:30616"/>
    </ligand>
</feature>
<feature type="binding site" evidence="1">
    <location>
        <position position="57"/>
    </location>
    <ligand>
        <name>ATP</name>
        <dbReference type="ChEBI" id="CHEBI:30616"/>
    </ligand>
</feature>
<feature type="binding site" evidence="1">
    <location>
        <position position="85"/>
    </location>
    <ligand>
        <name>ATP</name>
        <dbReference type="ChEBI" id="CHEBI:30616"/>
    </ligand>
</feature>
<feature type="binding site" evidence="1">
    <location>
        <position position="91"/>
    </location>
    <ligand>
        <name>ATP</name>
        <dbReference type="ChEBI" id="CHEBI:30616"/>
    </ligand>
</feature>
<feature type="binding site" evidence="1">
    <location>
        <position position="102"/>
    </location>
    <ligand>
        <name>ATP</name>
        <dbReference type="ChEBI" id="CHEBI:30616"/>
    </ligand>
</feature>
<feature type="binding site" evidence="1">
    <location>
        <position position="112"/>
    </location>
    <ligand>
        <name>ATP</name>
        <dbReference type="ChEBI" id="CHEBI:30616"/>
    </ligand>
</feature>